<dbReference type="EC" id="2.8.4.4" evidence="1"/>
<dbReference type="EMBL" id="CU928164">
    <property type="protein sequence ID" value="CAR16951.1"/>
    <property type="molecule type" value="Genomic_DNA"/>
</dbReference>
<dbReference type="RefSeq" id="WP_000049367.1">
    <property type="nucleotide sequence ID" value="NC_011750.1"/>
</dbReference>
<dbReference type="RefSeq" id="YP_002406839.1">
    <property type="nucleotide sequence ID" value="NC_011750.1"/>
</dbReference>
<dbReference type="SMR" id="B7NNR8"/>
<dbReference type="STRING" id="585057.ECIAI39_0814"/>
<dbReference type="GeneID" id="75204700"/>
<dbReference type="KEGG" id="ect:ECIAI39_0814"/>
<dbReference type="PATRIC" id="fig|585057.6.peg.858"/>
<dbReference type="HOGENOM" id="CLU_018697_0_0_6"/>
<dbReference type="Proteomes" id="UP000000749">
    <property type="component" value="Chromosome"/>
</dbReference>
<dbReference type="GO" id="GO:0005829">
    <property type="term" value="C:cytosol"/>
    <property type="evidence" value="ECO:0007669"/>
    <property type="project" value="TreeGrafter"/>
</dbReference>
<dbReference type="GO" id="GO:0051539">
    <property type="term" value="F:4 iron, 4 sulfur cluster binding"/>
    <property type="evidence" value="ECO:0007669"/>
    <property type="project" value="UniProtKB-UniRule"/>
</dbReference>
<dbReference type="GO" id="GO:0035599">
    <property type="term" value="F:aspartic acid methylthiotransferase activity"/>
    <property type="evidence" value="ECO:0007669"/>
    <property type="project" value="TreeGrafter"/>
</dbReference>
<dbReference type="GO" id="GO:0046872">
    <property type="term" value="F:metal ion binding"/>
    <property type="evidence" value="ECO:0007669"/>
    <property type="project" value="UniProtKB-KW"/>
</dbReference>
<dbReference type="GO" id="GO:0103039">
    <property type="term" value="F:protein methylthiotransferase activity"/>
    <property type="evidence" value="ECO:0007669"/>
    <property type="project" value="UniProtKB-EC"/>
</dbReference>
<dbReference type="GO" id="GO:0006400">
    <property type="term" value="P:tRNA modification"/>
    <property type="evidence" value="ECO:0007669"/>
    <property type="project" value="InterPro"/>
</dbReference>
<dbReference type="CDD" id="cd01335">
    <property type="entry name" value="Radical_SAM"/>
    <property type="match status" value="1"/>
</dbReference>
<dbReference type="FunFam" id="2.40.50.140:FF:000060">
    <property type="entry name" value="Ribosomal protein S12 methylthiotransferase RimO"/>
    <property type="match status" value="1"/>
</dbReference>
<dbReference type="FunFam" id="3.40.50.12160:FF:000002">
    <property type="entry name" value="Ribosomal protein S12 methylthiotransferase RimO"/>
    <property type="match status" value="1"/>
</dbReference>
<dbReference type="FunFam" id="3.80.30.20:FF:000001">
    <property type="entry name" value="tRNA-2-methylthio-N(6)-dimethylallyladenosine synthase 2"/>
    <property type="match status" value="1"/>
</dbReference>
<dbReference type="Gene3D" id="3.40.50.12160">
    <property type="entry name" value="Methylthiotransferase, N-terminal domain"/>
    <property type="match status" value="1"/>
</dbReference>
<dbReference type="Gene3D" id="2.40.50.140">
    <property type="entry name" value="Nucleic acid-binding proteins"/>
    <property type="match status" value="1"/>
</dbReference>
<dbReference type="Gene3D" id="3.80.30.20">
    <property type="entry name" value="tm_1862 like domain"/>
    <property type="match status" value="1"/>
</dbReference>
<dbReference type="HAMAP" id="MF_01865">
    <property type="entry name" value="MTTase_RimO"/>
    <property type="match status" value="1"/>
</dbReference>
<dbReference type="InterPro" id="IPR006638">
    <property type="entry name" value="Elp3/MiaA/NifB-like_rSAM"/>
</dbReference>
<dbReference type="InterPro" id="IPR005839">
    <property type="entry name" value="Methylthiotransferase"/>
</dbReference>
<dbReference type="InterPro" id="IPR020612">
    <property type="entry name" value="Methylthiotransferase_CS"/>
</dbReference>
<dbReference type="InterPro" id="IPR013848">
    <property type="entry name" value="Methylthiotransferase_N"/>
</dbReference>
<dbReference type="InterPro" id="IPR038135">
    <property type="entry name" value="Methylthiotransferase_N_sf"/>
</dbReference>
<dbReference type="InterPro" id="IPR012340">
    <property type="entry name" value="NA-bd_OB-fold"/>
</dbReference>
<dbReference type="InterPro" id="IPR005840">
    <property type="entry name" value="Ribosomal_uS12_MeSTrfase_RimO"/>
</dbReference>
<dbReference type="InterPro" id="IPR007197">
    <property type="entry name" value="rSAM"/>
</dbReference>
<dbReference type="InterPro" id="IPR023404">
    <property type="entry name" value="rSAM_horseshoe"/>
</dbReference>
<dbReference type="InterPro" id="IPR002792">
    <property type="entry name" value="TRAM_dom"/>
</dbReference>
<dbReference type="NCBIfam" id="TIGR01125">
    <property type="entry name" value="30S ribosomal protein S12 methylthiotransferase RimO"/>
    <property type="match status" value="1"/>
</dbReference>
<dbReference type="NCBIfam" id="TIGR00089">
    <property type="entry name" value="MiaB/RimO family radical SAM methylthiotransferase"/>
    <property type="match status" value="1"/>
</dbReference>
<dbReference type="PANTHER" id="PTHR43837">
    <property type="entry name" value="RIBOSOMAL PROTEIN S12 METHYLTHIOTRANSFERASE RIMO"/>
    <property type="match status" value="1"/>
</dbReference>
<dbReference type="PANTHER" id="PTHR43837:SF1">
    <property type="entry name" value="RIBOSOMAL PROTEIN US12 METHYLTHIOTRANSFERASE RIMO"/>
    <property type="match status" value="1"/>
</dbReference>
<dbReference type="Pfam" id="PF04055">
    <property type="entry name" value="Radical_SAM"/>
    <property type="match status" value="1"/>
</dbReference>
<dbReference type="Pfam" id="PF18693">
    <property type="entry name" value="TRAM_2"/>
    <property type="match status" value="1"/>
</dbReference>
<dbReference type="Pfam" id="PF00919">
    <property type="entry name" value="UPF0004"/>
    <property type="match status" value="1"/>
</dbReference>
<dbReference type="SFLD" id="SFLDG01082">
    <property type="entry name" value="B12-binding_domain_containing"/>
    <property type="match status" value="1"/>
</dbReference>
<dbReference type="SFLD" id="SFLDS00029">
    <property type="entry name" value="Radical_SAM"/>
    <property type="match status" value="1"/>
</dbReference>
<dbReference type="SFLD" id="SFLDF00274">
    <property type="entry name" value="ribosomal_protein_S12_methylth"/>
    <property type="match status" value="1"/>
</dbReference>
<dbReference type="SMART" id="SM00729">
    <property type="entry name" value="Elp3"/>
    <property type="match status" value="1"/>
</dbReference>
<dbReference type="SUPFAM" id="SSF102114">
    <property type="entry name" value="Radical SAM enzymes"/>
    <property type="match status" value="1"/>
</dbReference>
<dbReference type="PROSITE" id="PS51449">
    <property type="entry name" value="MTTASE_N"/>
    <property type="match status" value="1"/>
</dbReference>
<dbReference type="PROSITE" id="PS01278">
    <property type="entry name" value="MTTASE_RADICAL"/>
    <property type="match status" value="1"/>
</dbReference>
<dbReference type="PROSITE" id="PS51918">
    <property type="entry name" value="RADICAL_SAM"/>
    <property type="match status" value="1"/>
</dbReference>
<dbReference type="PROSITE" id="PS50926">
    <property type="entry name" value="TRAM"/>
    <property type="match status" value="1"/>
</dbReference>
<feature type="chain" id="PRO_0000374829" description="Ribosomal protein uS12 methylthiotransferase RimO">
    <location>
        <begin position="1"/>
        <end position="441"/>
    </location>
</feature>
<feature type="domain" description="MTTase N-terminal" evidence="1">
    <location>
        <begin position="8"/>
        <end position="118"/>
    </location>
</feature>
<feature type="domain" description="Radical SAM core" evidence="2">
    <location>
        <begin position="136"/>
        <end position="373"/>
    </location>
</feature>
<feature type="domain" description="TRAM" evidence="1">
    <location>
        <begin position="376"/>
        <end position="441"/>
    </location>
</feature>
<feature type="binding site" evidence="1">
    <location>
        <position position="17"/>
    </location>
    <ligand>
        <name>[4Fe-4S] cluster</name>
        <dbReference type="ChEBI" id="CHEBI:49883"/>
        <label>1</label>
    </ligand>
</feature>
<feature type="binding site" evidence="1">
    <location>
        <position position="53"/>
    </location>
    <ligand>
        <name>[4Fe-4S] cluster</name>
        <dbReference type="ChEBI" id="CHEBI:49883"/>
        <label>1</label>
    </ligand>
</feature>
<feature type="binding site" evidence="1">
    <location>
        <position position="82"/>
    </location>
    <ligand>
        <name>[4Fe-4S] cluster</name>
        <dbReference type="ChEBI" id="CHEBI:49883"/>
        <label>1</label>
    </ligand>
</feature>
<feature type="binding site" evidence="1">
    <location>
        <position position="150"/>
    </location>
    <ligand>
        <name>[4Fe-4S] cluster</name>
        <dbReference type="ChEBI" id="CHEBI:49883"/>
        <label>2</label>
        <note>4Fe-4S-S-AdoMet</note>
    </ligand>
</feature>
<feature type="binding site" evidence="1">
    <location>
        <position position="154"/>
    </location>
    <ligand>
        <name>[4Fe-4S] cluster</name>
        <dbReference type="ChEBI" id="CHEBI:49883"/>
        <label>2</label>
        <note>4Fe-4S-S-AdoMet</note>
    </ligand>
</feature>
<feature type="binding site" evidence="1">
    <location>
        <position position="157"/>
    </location>
    <ligand>
        <name>[4Fe-4S] cluster</name>
        <dbReference type="ChEBI" id="CHEBI:49883"/>
        <label>2</label>
        <note>4Fe-4S-S-AdoMet</note>
    </ligand>
</feature>
<accession>B7NNR8</accession>
<proteinExistence type="inferred from homology"/>
<protein>
    <recommendedName>
        <fullName evidence="1">Ribosomal protein uS12 methylthiotransferase RimO</fullName>
        <shortName evidence="1">uS12 MTTase</shortName>
        <shortName evidence="1">uS12 methylthiotransferase</shortName>
        <ecNumber evidence="1">2.8.4.4</ecNumber>
    </recommendedName>
    <alternativeName>
        <fullName evidence="1">Ribosomal protein uS12 (aspartate-C(3))-methylthiotransferase</fullName>
    </alternativeName>
    <alternativeName>
        <fullName evidence="1">Ribosome maturation factor RimO</fullName>
    </alternativeName>
</protein>
<name>RIMO_ECO7I</name>
<sequence>MSKVTPQPKIGFVSLGCPKNLVDSERILTELRTEGYDVVPSYDDADMVIVNTCGFIDSAVQESLEAIGEALNENGKVIVTGCLGAKEDQIREVHPKVLEITGPHSYEQVLEHVHHYVPKPKHNPFLSLVPEQGVKLTPRHYAYLKISEGCNHRCTFCIIPSMRGDLVSRPIGEVLSEAKRLVDAGVKEILVISQDTSAYGVDVKHRTGFHNGEPVKTSMVSLCEQLSKLGIWTRLHYVYPYPHVDDVIPLMAEGKILPYLDIPLQHASPRILKLMKRPGSVDRQLARIKQWREICPELTLRSTFIVGFPGETEEDFQMLLDFLKEARLDRVGCFKYSPVEGADANALPDQVPEEVKEERWNRFMQLQQQISAERLQEKVGREILVIIDEVDEEGAIGRSMADAPEIDGAVYLNGETNVKPGDILRVKVEHADEYDLWGSRV</sequence>
<reference key="1">
    <citation type="journal article" date="2009" name="PLoS Genet.">
        <title>Organised genome dynamics in the Escherichia coli species results in highly diverse adaptive paths.</title>
        <authorList>
            <person name="Touchon M."/>
            <person name="Hoede C."/>
            <person name="Tenaillon O."/>
            <person name="Barbe V."/>
            <person name="Baeriswyl S."/>
            <person name="Bidet P."/>
            <person name="Bingen E."/>
            <person name="Bonacorsi S."/>
            <person name="Bouchier C."/>
            <person name="Bouvet O."/>
            <person name="Calteau A."/>
            <person name="Chiapello H."/>
            <person name="Clermont O."/>
            <person name="Cruveiller S."/>
            <person name="Danchin A."/>
            <person name="Diard M."/>
            <person name="Dossat C."/>
            <person name="Karoui M.E."/>
            <person name="Frapy E."/>
            <person name="Garry L."/>
            <person name="Ghigo J.M."/>
            <person name="Gilles A.M."/>
            <person name="Johnson J."/>
            <person name="Le Bouguenec C."/>
            <person name="Lescat M."/>
            <person name="Mangenot S."/>
            <person name="Martinez-Jehanne V."/>
            <person name="Matic I."/>
            <person name="Nassif X."/>
            <person name="Oztas S."/>
            <person name="Petit M.A."/>
            <person name="Pichon C."/>
            <person name="Rouy Z."/>
            <person name="Ruf C.S."/>
            <person name="Schneider D."/>
            <person name="Tourret J."/>
            <person name="Vacherie B."/>
            <person name="Vallenet D."/>
            <person name="Medigue C."/>
            <person name="Rocha E.P.C."/>
            <person name="Denamur E."/>
        </authorList>
    </citation>
    <scope>NUCLEOTIDE SEQUENCE [LARGE SCALE GENOMIC DNA]</scope>
    <source>
        <strain>IAI39 / ExPEC</strain>
    </source>
</reference>
<evidence type="ECO:0000255" key="1">
    <source>
        <dbReference type="HAMAP-Rule" id="MF_01865"/>
    </source>
</evidence>
<evidence type="ECO:0000255" key="2">
    <source>
        <dbReference type="PROSITE-ProRule" id="PRU01266"/>
    </source>
</evidence>
<organism>
    <name type="scientific">Escherichia coli O7:K1 (strain IAI39 / ExPEC)</name>
    <dbReference type="NCBI Taxonomy" id="585057"/>
    <lineage>
        <taxon>Bacteria</taxon>
        <taxon>Pseudomonadati</taxon>
        <taxon>Pseudomonadota</taxon>
        <taxon>Gammaproteobacteria</taxon>
        <taxon>Enterobacterales</taxon>
        <taxon>Enterobacteriaceae</taxon>
        <taxon>Escherichia</taxon>
    </lineage>
</organism>
<comment type="function">
    <text evidence="1">Catalyzes the methylthiolation of an aspartic acid residue of ribosomal protein uS12.</text>
</comment>
<comment type="catalytic activity">
    <reaction evidence="1">
        <text>L-aspartate(89)-[ribosomal protein uS12]-hydrogen + (sulfur carrier)-SH + AH2 + 2 S-adenosyl-L-methionine = 3-methylsulfanyl-L-aspartate(89)-[ribosomal protein uS12]-hydrogen + (sulfur carrier)-H + 5'-deoxyadenosine + L-methionine + A + S-adenosyl-L-homocysteine + 2 H(+)</text>
        <dbReference type="Rhea" id="RHEA:37087"/>
        <dbReference type="Rhea" id="RHEA-COMP:10460"/>
        <dbReference type="Rhea" id="RHEA-COMP:10461"/>
        <dbReference type="Rhea" id="RHEA-COMP:14737"/>
        <dbReference type="Rhea" id="RHEA-COMP:14739"/>
        <dbReference type="ChEBI" id="CHEBI:13193"/>
        <dbReference type="ChEBI" id="CHEBI:15378"/>
        <dbReference type="ChEBI" id="CHEBI:17319"/>
        <dbReference type="ChEBI" id="CHEBI:17499"/>
        <dbReference type="ChEBI" id="CHEBI:29917"/>
        <dbReference type="ChEBI" id="CHEBI:29961"/>
        <dbReference type="ChEBI" id="CHEBI:57844"/>
        <dbReference type="ChEBI" id="CHEBI:57856"/>
        <dbReference type="ChEBI" id="CHEBI:59789"/>
        <dbReference type="ChEBI" id="CHEBI:64428"/>
        <dbReference type="ChEBI" id="CHEBI:73599"/>
        <dbReference type="EC" id="2.8.4.4"/>
    </reaction>
</comment>
<comment type="cofactor">
    <cofactor evidence="1">
        <name>[4Fe-4S] cluster</name>
        <dbReference type="ChEBI" id="CHEBI:49883"/>
    </cofactor>
    <text evidence="1">Binds 2 [4Fe-4S] clusters. One cluster is coordinated with 3 cysteines and an exchangeable S-adenosyl-L-methionine.</text>
</comment>
<comment type="subcellular location">
    <subcellularLocation>
        <location evidence="1">Cytoplasm</location>
    </subcellularLocation>
</comment>
<comment type="similarity">
    <text evidence="1">Belongs to the methylthiotransferase family. RimO subfamily.</text>
</comment>
<keyword id="KW-0004">4Fe-4S</keyword>
<keyword id="KW-0963">Cytoplasm</keyword>
<keyword id="KW-0408">Iron</keyword>
<keyword id="KW-0411">Iron-sulfur</keyword>
<keyword id="KW-0479">Metal-binding</keyword>
<keyword id="KW-0949">S-adenosyl-L-methionine</keyword>
<keyword id="KW-0808">Transferase</keyword>
<gene>
    <name evidence="1" type="primary">rimO</name>
    <name type="ordered locus">ECIAI39_0814</name>
</gene>